<feature type="chain" id="PRO_0000066467" description="Uncharacterized 59.1 kDa protein in rpoA3 5'region">
    <location>
        <begin position="1"/>
        <end position="528"/>
    </location>
</feature>
<dbReference type="EMBL" id="X60325">
    <property type="protein sequence ID" value="CAA42894.1"/>
    <property type="molecule type" value="Genomic_DNA"/>
</dbReference>
<dbReference type="PIR" id="S22811">
    <property type="entry name" value="S22811"/>
</dbReference>
<accession>P25203</accession>
<protein>
    <recommendedName>
        <fullName>Uncharacterized 59.1 kDa protein in rpoA3 5'region</fullName>
    </recommendedName>
</protein>
<reference key="1">
    <citation type="journal article" date="1992" name="Nucleic Acids Res.">
        <title>Nucleotide sequence of the gene encoding the largest subunit of the DNA-dependent RNA polymerase III of Giardia lamblia.</title>
        <authorList>
            <person name="Lanzendoerfer M."/>
            <person name="Palm P."/>
            <person name="Grampp B."/>
            <person name="Peattie D.A."/>
            <person name="Zillig W."/>
        </authorList>
    </citation>
    <scope>NUCLEOTIDE SEQUENCE [GENOMIC DNA]</scope>
    <source>
        <strain>SSP. P1</strain>
    </source>
</reference>
<organism>
    <name type="scientific">Giardia intestinalis</name>
    <name type="common">Giardia lamblia</name>
    <dbReference type="NCBI Taxonomy" id="5741"/>
    <lineage>
        <taxon>Eukaryota</taxon>
        <taxon>Metamonada</taxon>
        <taxon>Diplomonadida</taxon>
        <taxon>Hexamitidae</taxon>
        <taxon>Giardiinae</taxon>
        <taxon>Giardia</taxon>
    </lineage>
</organism>
<proteinExistence type="predicted"/>
<name>YRP3_GIAIN</name>
<sequence length="528" mass="59052">MKQYALHKELVQKAVEGADGYSIILGIVSCGEGLRLLVAMNCLWPGAGSIQTLLCGLPSLPPCPESRDILRALFQSIGAADCMPDMAQRHHTFLHKLTLISIYESSNLKYDEVKQALRKARQDVVEDVPLPVFKVILFPQLSFLRDALSVHCDLFTVVTVLLESLVDTAPDGWHLDAAEADCSTNAFNFDSGEVKEDRLWGEMRTLITKFSEAQHQLDYLSLIDLKAILRLIREHKETLIHTMMAVSVTNPLSQQCIPSLTDSKWLQHAHFIEGLVTLLAPFESMLTAPNACAFDVYAHLDRLRSILRDARDMLPCAVPDFLSMDRKCARALHSDNIAPEEAHFYFTILSIYIDEIDSILDCYSPYVSGFKLCTFTLGTVTLSEITSSLSSLPCKLTNLAQIAEEYYFIYQSEQIADCLSTLQSVNRCEDVYEHWKTLVTFWSRLLREYSLASRLMLLLLTAFSTPAIFLASKTVISSALSAQRSCLTEANSEAALLLHLKHGFIVKTLFKFILKQPIGGGLLRDGAE</sequence>